<gene>
    <name type="primary">mrpl-11</name>
    <name type="ORF">B0303.15</name>
</gene>
<organism>
    <name type="scientific">Caenorhabditis elegans</name>
    <dbReference type="NCBI Taxonomy" id="6239"/>
    <lineage>
        <taxon>Eukaryota</taxon>
        <taxon>Metazoa</taxon>
        <taxon>Ecdysozoa</taxon>
        <taxon>Nematoda</taxon>
        <taxon>Chromadorea</taxon>
        <taxon>Rhabditida</taxon>
        <taxon>Rhabditina</taxon>
        <taxon>Rhabditomorpha</taxon>
        <taxon>Rhabditoidea</taxon>
        <taxon>Rhabditidae</taxon>
        <taxon>Peloderinae</taxon>
        <taxon>Caenorhabditis</taxon>
    </lineage>
</organism>
<accession>P34264</accession>
<comment type="subunit">
    <text evidence="1">Component of the mitochondrial ribosome large subunit (39S) which comprises a 16S rRNA and about 50 distinct proteins.</text>
</comment>
<comment type="subcellular location">
    <subcellularLocation>
        <location evidence="1">Mitochondrion</location>
    </subcellularLocation>
</comment>
<comment type="similarity">
    <text evidence="3">Belongs to the universal ribosomal protein uL11 family.</text>
</comment>
<feature type="transit peptide" description="Mitochondrion" evidence="2">
    <location>
        <begin position="1"/>
        <end status="unknown"/>
    </location>
</feature>
<feature type="chain" id="PRO_0000030445" description="Large ribosomal subunit protein uL11m">
    <location>
        <begin status="unknown"/>
        <end position="195"/>
    </location>
</feature>
<evidence type="ECO:0000250" key="1">
    <source>
        <dbReference type="UniProtKB" id="Q9Y3B7"/>
    </source>
</evidence>
<evidence type="ECO:0000255" key="2"/>
<evidence type="ECO:0000305" key="3"/>
<name>RM11_CAEEL</name>
<dbReference type="EMBL" id="FO080163">
    <property type="protein sequence ID" value="CCD61715.1"/>
    <property type="molecule type" value="Genomic_DNA"/>
</dbReference>
<dbReference type="PIR" id="S27795">
    <property type="entry name" value="S27795"/>
</dbReference>
<dbReference type="RefSeq" id="NP_498923.1">
    <property type="nucleotide sequence ID" value="NM_066522.5"/>
</dbReference>
<dbReference type="SMR" id="P34264"/>
<dbReference type="BioGRID" id="46783">
    <property type="interactions" value="4"/>
</dbReference>
<dbReference type="DIP" id="DIP-24352N"/>
<dbReference type="FunCoup" id="P34264">
    <property type="interactions" value="2055"/>
</dbReference>
<dbReference type="STRING" id="6239.B0303.15.1"/>
<dbReference type="PaxDb" id="6239-B0303.15"/>
<dbReference type="PeptideAtlas" id="P34264"/>
<dbReference type="EnsemblMetazoa" id="B0303.15.1">
    <property type="protein sequence ID" value="B0303.15.1"/>
    <property type="gene ID" value="WBGene00015133"/>
</dbReference>
<dbReference type="GeneID" id="181917"/>
<dbReference type="KEGG" id="cel:CELE_B0303.15"/>
<dbReference type="UCSC" id="B0303.15">
    <property type="organism name" value="c. elegans"/>
</dbReference>
<dbReference type="AGR" id="WB:WBGene00015133"/>
<dbReference type="CTD" id="181917"/>
<dbReference type="WormBase" id="B0303.15">
    <property type="protein sequence ID" value="CE00004"/>
    <property type="gene ID" value="WBGene00015133"/>
    <property type="gene designation" value="mrpl-11"/>
</dbReference>
<dbReference type="eggNOG" id="KOG3257">
    <property type="taxonomic scope" value="Eukaryota"/>
</dbReference>
<dbReference type="GeneTree" id="ENSGT00390000003153"/>
<dbReference type="HOGENOM" id="CLU_074237_1_1_1"/>
<dbReference type="InParanoid" id="P34264"/>
<dbReference type="OMA" id="CKQFNAK"/>
<dbReference type="OrthoDB" id="1091498at2759"/>
<dbReference type="PhylomeDB" id="P34264"/>
<dbReference type="Reactome" id="R-CEL-5389840">
    <property type="pathway name" value="Mitochondrial translation elongation"/>
</dbReference>
<dbReference type="Reactome" id="R-CEL-5419276">
    <property type="pathway name" value="Mitochondrial translation termination"/>
</dbReference>
<dbReference type="PRO" id="PR:P34264"/>
<dbReference type="Proteomes" id="UP000001940">
    <property type="component" value="Chromosome III"/>
</dbReference>
<dbReference type="Bgee" id="WBGene00015133">
    <property type="expression patterns" value="Expressed in pharyngeal muscle cell (C elegans) and 4 other cell types or tissues"/>
</dbReference>
<dbReference type="GO" id="GO:0005762">
    <property type="term" value="C:mitochondrial large ribosomal subunit"/>
    <property type="evidence" value="ECO:0000250"/>
    <property type="project" value="UniProtKB"/>
</dbReference>
<dbReference type="GO" id="GO:0070180">
    <property type="term" value="F:large ribosomal subunit rRNA binding"/>
    <property type="evidence" value="ECO:0000318"/>
    <property type="project" value="GO_Central"/>
</dbReference>
<dbReference type="GO" id="GO:0003735">
    <property type="term" value="F:structural constituent of ribosome"/>
    <property type="evidence" value="ECO:0000318"/>
    <property type="project" value="GO_Central"/>
</dbReference>
<dbReference type="GO" id="GO:0006412">
    <property type="term" value="P:translation"/>
    <property type="evidence" value="ECO:0000318"/>
    <property type="project" value="GO_Central"/>
</dbReference>
<dbReference type="CDD" id="cd00349">
    <property type="entry name" value="Ribosomal_L11"/>
    <property type="match status" value="1"/>
</dbReference>
<dbReference type="FunFam" id="1.10.10.250:FF:000003">
    <property type="entry name" value="Mitochondrial ribosomal protein L11"/>
    <property type="match status" value="1"/>
</dbReference>
<dbReference type="FunFam" id="3.30.1550.10:FF:000012">
    <property type="entry name" value="Probable 39S ribosomal protein L11, mitochondrial"/>
    <property type="match status" value="1"/>
</dbReference>
<dbReference type="Gene3D" id="1.10.10.250">
    <property type="entry name" value="Ribosomal protein L11, C-terminal domain"/>
    <property type="match status" value="1"/>
</dbReference>
<dbReference type="Gene3D" id="3.30.1550.10">
    <property type="entry name" value="Ribosomal protein L11/L12, N-terminal domain"/>
    <property type="match status" value="1"/>
</dbReference>
<dbReference type="HAMAP" id="MF_00736">
    <property type="entry name" value="Ribosomal_uL11"/>
    <property type="match status" value="1"/>
</dbReference>
<dbReference type="InterPro" id="IPR000911">
    <property type="entry name" value="Ribosomal_uL11"/>
</dbReference>
<dbReference type="InterPro" id="IPR020783">
    <property type="entry name" value="Ribosomal_uL11_C"/>
</dbReference>
<dbReference type="InterPro" id="IPR036769">
    <property type="entry name" value="Ribosomal_uL11_C_sf"/>
</dbReference>
<dbReference type="InterPro" id="IPR020784">
    <property type="entry name" value="Ribosomal_uL11_N"/>
</dbReference>
<dbReference type="InterPro" id="IPR036796">
    <property type="entry name" value="Ribosomal_uL11_N_sf"/>
</dbReference>
<dbReference type="PANTHER" id="PTHR11661">
    <property type="entry name" value="60S RIBOSOMAL PROTEIN L12"/>
    <property type="match status" value="1"/>
</dbReference>
<dbReference type="PANTHER" id="PTHR11661:SF1">
    <property type="entry name" value="LARGE RIBOSOMAL SUBUNIT PROTEIN UL11M"/>
    <property type="match status" value="1"/>
</dbReference>
<dbReference type="Pfam" id="PF00298">
    <property type="entry name" value="Ribosomal_L11"/>
    <property type="match status" value="1"/>
</dbReference>
<dbReference type="Pfam" id="PF03946">
    <property type="entry name" value="Ribosomal_L11_N"/>
    <property type="match status" value="1"/>
</dbReference>
<dbReference type="SMART" id="SM00649">
    <property type="entry name" value="RL11"/>
    <property type="match status" value="1"/>
</dbReference>
<dbReference type="SUPFAM" id="SSF54747">
    <property type="entry name" value="Ribosomal L11/L12e N-terminal domain"/>
    <property type="match status" value="1"/>
</dbReference>
<dbReference type="SUPFAM" id="SSF46906">
    <property type="entry name" value="Ribosomal protein L11, C-terminal domain"/>
    <property type="match status" value="1"/>
</dbReference>
<proteinExistence type="inferred from homology"/>
<sequence length="195" mass="21718">MASKGAARVRKKEIVKVVHGALLRTNIKAQMASAAPPLGPQLGQRGLNVANFCKEFNKETGHFKQGVPLPTRITVKPDRTYDLEICTPTTTWLLKQAAGIGRGKASKDEIVGKLTVKHLYEIAKIKSRDKALQHVPLEQICRMLIKTCRTLGIDVQYHDLDPVELKEFLVARKEKVDAQLKDLADKKAAKMLRTT</sequence>
<protein>
    <recommendedName>
        <fullName evidence="3">Large ribosomal subunit protein uL11m</fullName>
    </recommendedName>
    <alternativeName>
        <fullName>39S ribosomal protein L11, mitochondrial</fullName>
    </alternativeName>
</protein>
<reference key="1">
    <citation type="journal article" date="1992" name="Nature">
        <title>The C. elegans genome sequencing project: a beginning.</title>
        <authorList>
            <person name="Sulston J."/>
            <person name="Du Z."/>
            <person name="Thomas K."/>
            <person name="Wilson R."/>
            <person name="Hillier L."/>
            <person name="Staden R."/>
            <person name="Halloran N."/>
            <person name="Green P."/>
            <person name="Thierry-Mieg J."/>
            <person name="Qiu L."/>
            <person name="Dear S."/>
            <person name="Coulson A."/>
            <person name="Craxton M."/>
            <person name="Durbin R."/>
            <person name="Berks M."/>
            <person name="Metzstein M."/>
            <person name="Hawkins T."/>
            <person name="Ainscough R."/>
            <person name="Waterston R."/>
        </authorList>
    </citation>
    <scope>NUCLEOTIDE SEQUENCE [LARGE SCALE GENOMIC DNA]</scope>
    <source>
        <strain>Bristol N2</strain>
    </source>
</reference>
<reference key="2">
    <citation type="journal article" date="1998" name="Science">
        <title>Genome sequence of the nematode C. elegans: a platform for investigating biology.</title>
        <authorList>
            <consortium name="The C. elegans sequencing consortium"/>
        </authorList>
    </citation>
    <scope>NUCLEOTIDE SEQUENCE [LARGE SCALE GENOMIC DNA]</scope>
    <source>
        <strain>Bristol N2</strain>
    </source>
</reference>
<keyword id="KW-0496">Mitochondrion</keyword>
<keyword id="KW-1185">Reference proteome</keyword>
<keyword id="KW-0687">Ribonucleoprotein</keyword>
<keyword id="KW-0689">Ribosomal protein</keyword>
<keyword id="KW-0809">Transit peptide</keyword>